<accession>A8ADC6</accession>
<gene>
    <name type="primary">nudK</name>
    <name type="ordered locus">CKO_00326</name>
</gene>
<proteinExistence type="inferred from homology"/>
<reference key="1">
    <citation type="submission" date="2007-08" db="EMBL/GenBank/DDBJ databases">
        <authorList>
            <consortium name="The Citrobacter koseri Genome Sequencing Project"/>
            <person name="McClelland M."/>
            <person name="Sanderson E.K."/>
            <person name="Porwollik S."/>
            <person name="Spieth J."/>
            <person name="Clifton W.S."/>
            <person name="Latreille P."/>
            <person name="Courtney L."/>
            <person name="Wang C."/>
            <person name="Pepin K."/>
            <person name="Bhonagiri V."/>
            <person name="Nash W."/>
            <person name="Johnson M."/>
            <person name="Thiruvilangam P."/>
            <person name="Wilson R."/>
        </authorList>
    </citation>
    <scope>NUCLEOTIDE SEQUENCE [LARGE SCALE GENOMIC DNA]</scope>
    <source>
        <strain>ATCC BAA-895 / CDC 4225-83 / SGSC4696</strain>
    </source>
</reference>
<organism>
    <name type="scientific">Citrobacter koseri (strain ATCC BAA-895 / CDC 4225-83 / SGSC4696)</name>
    <dbReference type="NCBI Taxonomy" id="290338"/>
    <lineage>
        <taxon>Bacteria</taxon>
        <taxon>Pseudomonadati</taxon>
        <taxon>Pseudomonadota</taxon>
        <taxon>Gammaproteobacteria</taxon>
        <taxon>Enterobacterales</taxon>
        <taxon>Enterobacteriaceae</taxon>
        <taxon>Citrobacter</taxon>
    </lineage>
</organism>
<dbReference type="EC" id="3.6.1.-" evidence="1"/>
<dbReference type="EMBL" id="CP000822">
    <property type="protein sequence ID" value="ABV11489.1"/>
    <property type="molecule type" value="Genomic_DNA"/>
</dbReference>
<dbReference type="RefSeq" id="WP_012131319.1">
    <property type="nucleotide sequence ID" value="NC_009792.1"/>
</dbReference>
<dbReference type="SMR" id="A8ADC6"/>
<dbReference type="STRING" id="290338.CKO_00326"/>
<dbReference type="GeneID" id="45134596"/>
<dbReference type="KEGG" id="cko:CKO_00326"/>
<dbReference type="HOGENOM" id="CLU_062658_6_0_6"/>
<dbReference type="OrthoDB" id="5292471at2"/>
<dbReference type="Proteomes" id="UP000008148">
    <property type="component" value="Chromosome"/>
</dbReference>
<dbReference type="GO" id="GO:0005829">
    <property type="term" value="C:cytosol"/>
    <property type="evidence" value="ECO:0007669"/>
    <property type="project" value="TreeGrafter"/>
</dbReference>
<dbReference type="GO" id="GO:0016818">
    <property type="term" value="F:hydrolase activity, acting on acid anhydrides, in phosphorus-containing anhydrides"/>
    <property type="evidence" value="ECO:0007669"/>
    <property type="project" value="InterPro"/>
</dbReference>
<dbReference type="GO" id="GO:0046872">
    <property type="term" value="F:metal ion binding"/>
    <property type="evidence" value="ECO:0007669"/>
    <property type="project" value="UniProtKB-KW"/>
</dbReference>
<dbReference type="GO" id="GO:0006753">
    <property type="term" value="P:nucleoside phosphate metabolic process"/>
    <property type="evidence" value="ECO:0007669"/>
    <property type="project" value="TreeGrafter"/>
</dbReference>
<dbReference type="GO" id="GO:0019693">
    <property type="term" value="P:ribose phosphate metabolic process"/>
    <property type="evidence" value="ECO:0007669"/>
    <property type="project" value="TreeGrafter"/>
</dbReference>
<dbReference type="CDD" id="cd24157">
    <property type="entry name" value="NUDIX_GDPMK"/>
    <property type="match status" value="1"/>
</dbReference>
<dbReference type="FunFam" id="3.90.79.10:FF:000010">
    <property type="entry name" value="GDP-mannose pyrophosphatase NudK"/>
    <property type="match status" value="1"/>
</dbReference>
<dbReference type="Gene3D" id="3.90.79.10">
    <property type="entry name" value="Nucleoside Triphosphate Pyrophosphohydrolase"/>
    <property type="match status" value="1"/>
</dbReference>
<dbReference type="InterPro" id="IPR004385">
    <property type="entry name" value="NDP_pyrophosphatase"/>
</dbReference>
<dbReference type="InterPro" id="IPR015797">
    <property type="entry name" value="NUDIX_hydrolase-like_dom_sf"/>
</dbReference>
<dbReference type="InterPro" id="IPR000086">
    <property type="entry name" value="NUDIX_hydrolase_dom"/>
</dbReference>
<dbReference type="NCBIfam" id="TIGR00052">
    <property type="entry name" value="nudix-type nucleoside diphosphatase, YffH/AdpP family"/>
    <property type="match status" value="1"/>
</dbReference>
<dbReference type="NCBIfam" id="NF011585">
    <property type="entry name" value="PRK15009.1"/>
    <property type="match status" value="1"/>
</dbReference>
<dbReference type="PANTHER" id="PTHR11839:SF18">
    <property type="entry name" value="NUDIX HYDROLASE DOMAIN-CONTAINING PROTEIN"/>
    <property type="match status" value="1"/>
</dbReference>
<dbReference type="PANTHER" id="PTHR11839">
    <property type="entry name" value="UDP/ADP-SUGAR PYROPHOSPHATASE"/>
    <property type="match status" value="1"/>
</dbReference>
<dbReference type="Pfam" id="PF00293">
    <property type="entry name" value="NUDIX"/>
    <property type="match status" value="1"/>
</dbReference>
<dbReference type="SUPFAM" id="SSF55811">
    <property type="entry name" value="Nudix"/>
    <property type="match status" value="1"/>
</dbReference>
<dbReference type="PROSITE" id="PS51462">
    <property type="entry name" value="NUDIX"/>
    <property type="match status" value="1"/>
</dbReference>
<feature type="chain" id="PRO_0000342478" description="GDP-mannose pyrophosphatase">
    <location>
        <begin position="1"/>
        <end position="191"/>
    </location>
</feature>
<feature type="domain" description="Nudix hydrolase" evidence="2">
    <location>
        <begin position="43"/>
        <end position="180"/>
    </location>
</feature>
<feature type="short sequence motif" description="Nudix box">
    <location>
        <begin position="86"/>
        <end position="106"/>
    </location>
</feature>
<feature type="binding site" description="in other chain" evidence="1">
    <location>
        <position position="17"/>
    </location>
    <ligand>
        <name>GDP-alpha-D-mannose</name>
        <dbReference type="ChEBI" id="CHEBI:57527"/>
        <note>ligand shared between dimeric partners</note>
    </ligand>
</feature>
<feature type="binding site" evidence="1">
    <location>
        <begin position="38"/>
        <end position="40"/>
    </location>
    <ligand>
        <name>GDP-alpha-D-mannose</name>
        <dbReference type="ChEBI" id="CHEBI:57527"/>
        <note>ligand shared between dimeric partners</note>
    </ligand>
</feature>
<feature type="binding site" description="in other chain" evidence="1">
    <location>
        <position position="67"/>
    </location>
    <ligand>
        <name>GDP-alpha-D-mannose</name>
        <dbReference type="ChEBI" id="CHEBI:57527"/>
        <note>ligand shared between dimeric partners</note>
    </ligand>
</feature>
<feature type="binding site" description="in other chain" evidence="1">
    <location>
        <begin position="85"/>
        <end position="87"/>
    </location>
    <ligand>
        <name>GDP-alpha-D-mannose</name>
        <dbReference type="ChEBI" id="CHEBI:57527"/>
        <note>ligand shared between dimeric partners</note>
    </ligand>
</feature>
<feature type="binding site" evidence="1">
    <location>
        <position position="85"/>
    </location>
    <ligand>
        <name>Mg(2+)</name>
        <dbReference type="ChEBI" id="CHEBI:18420"/>
        <label>1</label>
    </ligand>
</feature>
<feature type="binding site" evidence="1">
    <location>
        <position position="100"/>
    </location>
    <ligand>
        <name>Mg(2+)</name>
        <dbReference type="ChEBI" id="CHEBI:18420"/>
        <label>2</label>
    </ligand>
</feature>
<feature type="binding site" description="in other chain" evidence="1">
    <location>
        <position position="104"/>
    </location>
    <ligand>
        <name>GDP-alpha-D-mannose</name>
        <dbReference type="ChEBI" id="CHEBI:57527"/>
        <note>ligand shared between dimeric partners</note>
    </ligand>
</feature>
<feature type="binding site" evidence="1">
    <location>
        <position position="104"/>
    </location>
    <ligand>
        <name>Mg(2+)</name>
        <dbReference type="ChEBI" id="CHEBI:18420"/>
        <label>1</label>
    </ligand>
</feature>
<feature type="binding site" evidence="1">
    <location>
        <position position="104"/>
    </location>
    <ligand>
        <name>Mg(2+)</name>
        <dbReference type="ChEBI" id="CHEBI:18420"/>
        <label>2</label>
    </ligand>
</feature>
<feature type="binding site" description="in other chain" evidence="1">
    <location>
        <position position="127"/>
    </location>
    <ligand>
        <name>GDP-alpha-D-mannose</name>
        <dbReference type="ChEBI" id="CHEBI:57527"/>
        <note>ligand shared between dimeric partners</note>
    </ligand>
</feature>
<feature type="binding site" description="in other chain" evidence="1">
    <location>
        <begin position="150"/>
        <end position="151"/>
    </location>
    <ligand>
        <name>GDP-alpha-D-mannose</name>
        <dbReference type="ChEBI" id="CHEBI:57527"/>
        <note>ligand shared between dimeric partners</note>
    </ligand>
</feature>
<feature type="binding site" evidence="1">
    <location>
        <position position="151"/>
    </location>
    <ligand>
        <name>Mg(2+)</name>
        <dbReference type="ChEBI" id="CHEBI:18420"/>
        <label>2</label>
    </ligand>
</feature>
<feature type="binding site" description="in other chain" evidence="1">
    <location>
        <position position="176"/>
    </location>
    <ligand>
        <name>GDP-alpha-D-mannose</name>
        <dbReference type="ChEBI" id="CHEBI:57527"/>
        <note>ligand shared between dimeric partners</note>
    </ligand>
</feature>
<comment type="function">
    <text evidence="1">Nucleoside diphosphate sugar hydrolase that hydrolyzes GDP-mannose as its preferred substrate, yielding GMP and mannose-1-phosphate.</text>
</comment>
<comment type="catalytic activity">
    <reaction evidence="1">
        <text>GDP-alpha-D-mannose + H2O = alpha-D-mannose 1-phosphate + GMP + 2 H(+)</text>
        <dbReference type="Rhea" id="RHEA:27978"/>
        <dbReference type="ChEBI" id="CHEBI:15377"/>
        <dbReference type="ChEBI" id="CHEBI:15378"/>
        <dbReference type="ChEBI" id="CHEBI:57527"/>
        <dbReference type="ChEBI" id="CHEBI:58115"/>
        <dbReference type="ChEBI" id="CHEBI:58409"/>
    </reaction>
</comment>
<comment type="cofactor">
    <cofactor evidence="1">
        <name>Mg(2+)</name>
        <dbReference type="ChEBI" id="CHEBI:18420"/>
    </cofactor>
</comment>
<comment type="subunit">
    <text evidence="1">Homodimer.</text>
</comment>
<comment type="domain">
    <text evidence="1">In the dimer, the N-terminal domains are swapped between the two monomers, such that residues of both chains contribute to the active site.</text>
</comment>
<comment type="similarity">
    <text evidence="3">Belongs to the Nudix hydrolase family. NudK subfamily.</text>
</comment>
<keyword id="KW-0378">Hydrolase</keyword>
<keyword id="KW-0460">Magnesium</keyword>
<keyword id="KW-0479">Metal-binding</keyword>
<keyword id="KW-1185">Reference proteome</keyword>
<protein>
    <recommendedName>
        <fullName>GDP-mannose pyrophosphatase</fullName>
        <ecNumber evidence="1">3.6.1.-</ecNumber>
    </recommendedName>
    <alternativeName>
        <fullName>GDP-mannose hydrolase</fullName>
    </alternativeName>
    <alternativeName>
        <fullName>GDPMK</fullName>
    </alternativeName>
</protein>
<evidence type="ECO:0000250" key="1">
    <source>
        <dbReference type="UniProtKB" id="P37128"/>
    </source>
</evidence>
<evidence type="ECO:0000255" key="2">
    <source>
        <dbReference type="PROSITE-ProRule" id="PRU00794"/>
    </source>
</evidence>
<evidence type="ECO:0000305" key="3"/>
<name>NUDK_CITK8</name>
<sequence length="191" mass="21649">MSQKITLIKDKVLSDNYFILRNITYDLTRKNGDVIRHKREVYDRGNGATILLYNREKQTVVLIRQFRVATWVNGNESGQLIETCAGLLDNDEPEACIRKEAIEETGYEVGEVRKLFELYMSPGGVTELIHFFIAEYSDSQRANAGGGVEDEDIEVLELPLTQALAMIKTGEIRDGKTVLLLNYLHSSSLIY</sequence>